<sequence>MSQQVIIFDTTLRDGEQALQASLSVKEKLQIALALERMGVDVMEVGFPVSSPGDFESVQTIARQVKNSRVCALARCVEKDIDVAAESLKVAEAFRIHTFIATSPMHIATKLRSTLDEVIERAIYMVKRARNYTDDVEFSCEDAGRTPIADLARVVEAAINAGATTINIPDTVGYTMPFEFAGIISGLYERVPNIDKAIISVHTHDDLGLAVGNSLAAVHAGARQVEGAMNGIGERAGNCSLEEVIMAIKVRKDILNVHTAINHQEIWRTSQLVSQICNMPIPANKAIVGSGAFAHSSGIHQDGVLKNRENYEIMTPESIGLNQIQLNLTSRSGRAAVKHRMDEMGYKESEYNLDNLYDAFLKLADKKGQVFDYDLEALAFIGKQQEEPEHFRLDYFSVQSGSNDIATAAVKLACGEEVKAEAANGNGPVDAVYQAINRITDYNVELVKYSLTAKGHGKDALGQVDIVANYNGRRFHGVGLATDIVESSAKAMVHVLNNIWRAAEVEKELQRKAQHNENNKETV</sequence>
<feature type="chain" id="PRO_1000149295" description="2-isopropylmalate synthase">
    <location>
        <begin position="1"/>
        <end position="523"/>
    </location>
</feature>
<feature type="domain" description="Pyruvate carboxyltransferase" evidence="1">
    <location>
        <begin position="5"/>
        <end position="267"/>
    </location>
</feature>
<feature type="region of interest" description="Regulatory domain" evidence="1">
    <location>
        <begin position="392"/>
        <end position="523"/>
    </location>
</feature>
<feature type="binding site" evidence="1">
    <location>
        <position position="14"/>
    </location>
    <ligand>
        <name>Mn(2+)</name>
        <dbReference type="ChEBI" id="CHEBI:29035"/>
    </ligand>
</feature>
<feature type="binding site" evidence="1">
    <location>
        <position position="202"/>
    </location>
    <ligand>
        <name>Mn(2+)</name>
        <dbReference type="ChEBI" id="CHEBI:29035"/>
    </ligand>
</feature>
<feature type="binding site" evidence="1">
    <location>
        <position position="204"/>
    </location>
    <ligand>
        <name>Mn(2+)</name>
        <dbReference type="ChEBI" id="CHEBI:29035"/>
    </ligand>
</feature>
<feature type="binding site" evidence="1">
    <location>
        <position position="238"/>
    </location>
    <ligand>
        <name>Mn(2+)</name>
        <dbReference type="ChEBI" id="CHEBI:29035"/>
    </ligand>
</feature>
<accession>B2U281</accession>
<name>LEU1_SHIB3</name>
<protein>
    <recommendedName>
        <fullName evidence="1">2-isopropylmalate synthase</fullName>
        <ecNumber evidence="1">2.3.3.13</ecNumber>
    </recommendedName>
    <alternativeName>
        <fullName evidence="1">Alpha-IPM synthase</fullName>
    </alternativeName>
    <alternativeName>
        <fullName evidence="1">Alpha-isopropylmalate synthase</fullName>
    </alternativeName>
</protein>
<dbReference type="EC" id="2.3.3.13" evidence="1"/>
<dbReference type="EMBL" id="CP001063">
    <property type="protein sequence ID" value="ACD09570.1"/>
    <property type="molecule type" value="Genomic_DNA"/>
</dbReference>
<dbReference type="RefSeq" id="WP_000082846.1">
    <property type="nucleotide sequence ID" value="NC_010658.1"/>
</dbReference>
<dbReference type="SMR" id="B2U281"/>
<dbReference type="STRING" id="344609.SbBS512_E0068"/>
<dbReference type="GeneID" id="75202109"/>
<dbReference type="KEGG" id="sbc:SbBS512_E0068"/>
<dbReference type="HOGENOM" id="CLU_022158_0_1_6"/>
<dbReference type="UniPathway" id="UPA00048">
    <property type="reaction ID" value="UER00070"/>
</dbReference>
<dbReference type="Proteomes" id="UP000001030">
    <property type="component" value="Chromosome"/>
</dbReference>
<dbReference type="GO" id="GO:0005829">
    <property type="term" value="C:cytosol"/>
    <property type="evidence" value="ECO:0007669"/>
    <property type="project" value="TreeGrafter"/>
</dbReference>
<dbReference type="GO" id="GO:0003852">
    <property type="term" value="F:2-isopropylmalate synthase activity"/>
    <property type="evidence" value="ECO:0007669"/>
    <property type="project" value="UniProtKB-UniRule"/>
</dbReference>
<dbReference type="GO" id="GO:0003985">
    <property type="term" value="F:acetyl-CoA C-acetyltransferase activity"/>
    <property type="evidence" value="ECO:0007669"/>
    <property type="project" value="UniProtKB-UniRule"/>
</dbReference>
<dbReference type="GO" id="GO:0030145">
    <property type="term" value="F:manganese ion binding"/>
    <property type="evidence" value="ECO:0007669"/>
    <property type="project" value="UniProtKB-UniRule"/>
</dbReference>
<dbReference type="GO" id="GO:0009098">
    <property type="term" value="P:L-leucine biosynthetic process"/>
    <property type="evidence" value="ECO:0007669"/>
    <property type="project" value="UniProtKB-UniRule"/>
</dbReference>
<dbReference type="CDD" id="cd07940">
    <property type="entry name" value="DRE_TIM_IPMS"/>
    <property type="match status" value="1"/>
</dbReference>
<dbReference type="FunFam" id="1.10.238.260:FF:000001">
    <property type="entry name" value="2-isopropylmalate synthase"/>
    <property type="match status" value="1"/>
</dbReference>
<dbReference type="FunFam" id="3.20.20.70:FF:000010">
    <property type="entry name" value="2-isopropylmalate synthase"/>
    <property type="match status" value="1"/>
</dbReference>
<dbReference type="FunFam" id="3.30.160.270:FF:000001">
    <property type="entry name" value="2-isopropylmalate synthase"/>
    <property type="match status" value="1"/>
</dbReference>
<dbReference type="Gene3D" id="1.10.238.260">
    <property type="match status" value="1"/>
</dbReference>
<dbReference type="Gene3D" id="3.30.160.270">
    <property type="match status" value="1"/>
</dbReference>
<dbReference type="Gene3D" id="3.20.20.70">
    <property type="entry name" value="Aldolase class I"/>
    <property type="match status" value="1"/>
</dbReference>
<dbReference type="HAMAP" id="MF_01025">
    <property type="entry name" value="LeuA_type1"/>
    <property type="match status" value="1"/>
</dbReference>
<dbReference type="InterPro" id="IPR050073">
    <property type="entry name" value="2-IPM_HCS-like"/>
</dbReference>
<dbReference type="InterPro" id="IPR013709">
    <property type="entry name" value="2-isopropylmalate_synth_dimer"/>
</dbReference>
<dbReference type="InterPro" id="IPR002034">
    <property type="entry name" value="AIPM/Hcit_synth_CS"/>
</dbReference>
<dbReference type="InterPro" id="IPR013785">
    <property type="entry name" value="Aldolase_TIM"/>
</dbReference>
<dbReference type="InterPro" id="IPR054691">
    <property type="entry name" value="LeuA/HCS_post-cat"/>
</dbReference>
<dbReference type="InterPro" id="IPR036230">
    <property type="entry name" value="LeuA_allosteric_dom_sf"/>
</dbReference>
<dbReference type="InterPro" id="IPR005671">
    <property type="entry name" value="LeuA_bact_synth"/>
</dbReference>
<dbReference type="InterPro" id="IPR000891">
    <property type="entry name" value="PYR_CT"/>
</dbReference>
<dbReference type="NCBIfam" id="TIGR00973">
    <property type="entry name" value="leuA_bact"/>
    <property type="match status" value="1"/>
</dbReference>
<dbReference type="NCBIfam" id="NF002084">
    <property type="entry name" value="PRK00915.1-1"/>
    <property type="match status" value="1"/>
</dbReference>
<dbReference type="NCBIfam" id="NF002086">
    <property type="entry name" value="PRK00915.1-3"/>
    <property type="match status" value="1"/>
</dbReference>
<dbReference type="PANTHER" id="PTHR10277:SF9">
    <property type="entry name" value="2-ISOPROPYLMALATE SYNTHASE 1, CHLOROPLASTIC-RELATED"/>
    <property type="match status" value="1"/>
</dbReference>
<dbReference type="PANTHER" id="PTHR10277">
    <property type="entry name" value="HOMOCITRATE SYNTHASE-RELATED"/>
    <property type="match status" value="1"/>
</dbReference>
<dbReference type="Pfam" id="PF22617">
    <property type="entry name" value="HCS_D2"/>
    <property type="match status" value="1"/>
</dbReference>
<dbReference type="Pfam" id="PF00682">
    <property type="entry name" value="HMGL-like"/>
    <property type="match status" value="1"/>
</dbReference>
<dbReference type="Pfam" id="PF08502">
    <property type="entry name" value="LeuA_dimer"/>
    <property type="match status" value="1"/>
</dbReference>
<dbReference type="SMART" id="SM00917">
    <property type="entry name" value="LeuA_dimer"/>
    <property type="match status" value="1"/>
</dbReference>
<dbReference type="SUPFAM" id="SSF110921">
    <property type="entry name" value="2-isopropylmalate synthase LeuA, allosteric (dimerisation) domain"/>
    <property type="match status" value="1"/>
</dbReference>
<dbReference type="SUPFAM" id="SSF51569">
    <property type="entry name" value="Aldolase"/>
    <property type="match status" value="1"/>
</dbReference>
<dbReference type="PROSITE" id="PS00815">
    <property type="entry name" value="AIPM_HOMOCIT_SYNTH_1"/>
    <property type="match status" value="1"/>
</dbReference>
<dbReference type="PROSITE" id="PS00816">
    <property type="entry name" value="AIPM_HOMOCIT_SYNTH_2"/>
    <property type="match status" value="1"/>
</dbReference>
<dbReference type="PROSITE" id="PS50991">
    <property type="entry name" value="PYR_CT"/>
    <property type="match status" value="1"/>
</dbReference>
<reference key="1">
    <citation type="submission" date="2008-05" db="EMBL/GenBank/DDBJ databases">
        <title>Complete sequence of Shigella boydii serotype 18 strain BS512.</title>
        <authorList>
            <person name="Rasko D.A."/>
            <person name="Rosovitz M."/>
            <person name="Maurelli A.T."/>
            <person name="Myers G."/>
            <person name="Seshadri R."/>
            <person name="Cer R."/>
            <person name="Jiang L."/>
            <person name="Ravel J."/>
            <person name="Sebastian Y."/>
        </authorList>
    </citation>
    <scope>NUCLEOTIDE SEQUENCE [LARGE SCALE GENOMIC DNA]</scope>
    <source>
        <strain>CDC 3083-94 / BS512</strain>
    </source>
</reference>
<gene>
    <name evidence="1" type="primary">leuA</name>
    <name type="ordered locus">SbBS512_E0068</name>
</gene>
<evidence type="ECO:0000255" key="1">
    <source>
        <dbReference type="HAMAP-Rule" id="MF_01025"/>
    </source>
</evidence>
<proteinExistence type="inferred from homology"/>
<comment type="function">
    <text evidence="1">Catalyzes the condensation of the acetyl group of acetyl-CoA with 3-methyl-2-oxobutanoate (2-ketoisovalerate) to form 3-carboxy-3-hydroxy-4-methylpentanoate (2-isopropylmalate).</text>
</comment>
<comment type="catalytic activity">
    <reaction evidence="1">
        <text>3-methyl-2-oxobutanoate + acetyl-CoA + H2O = (2S)-2-isopropylmalate + CoA + H(+)</text>
        <dbReference type="Rhea" id="RHEA:21524"/>
        <dbReference type="ChEBI" id="CHEBI:1178"/>
        <dbReference type="ChEBI" id="CHEBI:11851"/>
        <dbReference type="ChEBI" id="CHEBI:15377"/>
        <dbReference type="ChEBI" id="CHEBI:15378"/>
        <dbReference type="ChEBI" id="CHEBI:57287"/>
        <dbReference type="ChEBI" id="CHEBI:57288"/>
        <dbReference type="EC" id="2.3.3.13"/>
    </reaction>
</comment>
<comment type="cofactor">
    <cofactor evidence="1">
        <name>Mn(2+)</name>
        <dbReference type="ChEBI" id="CHEBI:29035"/>
    </cofactor>
</comment>
<comment type="pathway">
    <text evidence="1">Amino-acid biosynthesis; L-leucine biosynthesis; L-leucine from 3-methyl-2-oxobutanoate: step 1/4.</text>
</comment>
<comment type="subunit">
    <text evidence="1">Homodimer.</text>
</comment>
<comment type="subcellular location">
    <subcellularLocation>
        <location evidence="1">Cytoplasm</location>
    </subcellularLocation>
</comment>
<comment type="similarity">
    <text evidence="1">Belongs to the alpha-IPM synthase/homocitrate synthase family. LeuA type 1 subfamily.</text>
</comment>
<keyword id="KW-0028">Amino-acid biosynthesis</keyword>
<keyword id="KW-0100">Branched-chain amino acid biosynthesis</keyword>
<keyword id="KW-0963">Cytoplasm</keyword>
<keyword id="KW-0432">Leucine biosynthesis</keyword>
<keyword id="KW-0464">Manganese</keyword>
<keyword id="KW-0479">Metal-binding</keyword>
<keyword id="KW-1185">Reference proteome</keyword>
<keyword id="KW-0808">Transferase</keyword>
<organism>
    <name type="scientific">Shigella boydii serotype 18 (strain CDC 3083-94 / BS512)</name>
    <dbReference type="NCBI Taxonomy" id="344609"/>
    <lineage>
        <taxon>Bacteria</taxon>
        <taxon>Pseudomonadati</taxon>
        <taxon>Pseudomonadota</taxon>
        <taxon>Gammaproteobacteria</taxon>
        <taxon>Enterobacterales</taxon>
        <taxon>Enterobacteriaceae</taxon>
        <taxon>Shigella</taxon>
    </lineage>
</organism>